<proteinExistence type="evidence at protein level"/>
<feature type="signal peptide" evidence="2">
    <location>
        <begin position="1"/>
        <end position="19"/>
    </location>
</feature>
<feature type="chain" id="PRO_5001705905" description="Probable non-functional immunoglobulin lambda variable 5-48" evidence="2">
    <location>
        <begin position="20"/>
        <end position="105"/>
    </location>
</feature>
<feature type="domain" description="Ig-like" evidence="3">
    <location>
        <begin position="20"/>
        <end position="105" status="greater than"/>
    </location>
</feature>
<feature type="region of interest" description="Framework-1" evidence="1">
    <location>
        <begin position="20"/>
        <end position="44"/>
    </location>
</feature>
<feature type="region of interest" description="Complementarity-determining-1" evidence="1">
    <location>
        <begin position="45"/>
        <end position="53"/>
    </location>
</feature>
<feature type="region of interest" description="Framework-2" evidence="1">
    <location>
        <begin position="54"/>
        <end position="70"/>
    </location>
</feature>
<feature type="region of interest" description="Complementarity-determining-2" evidence="1">
    <location>
        <begin position="71"/>
        <end position="77"/>
    </location>
</feature>
<feature type="region of interest" description="Framework-3" evidence="1">
    <location>
        <begin position="78"/>
        <end position="105" status="greater than"/>
    </location>
</feature>
<feature type="non-terminal residue">
    <location>
        <position position="105"/>
    </location>
</feature>
<dbReference type="EMBL" id="AC245060">
    <property type="status" value="NOT_ANNOTATED_CDS"/>
    <property type="molecule type" value="Genomic_DNA"/>
</dbReference>
<dbReference type="SMR" id="A0A075B6I7"/>
<dbReference type="FunCoup" id="A0A075B6I7">
    <property type="interactions" value="181"/>
</dbReference>
<dbReference type="BioMuta" id="IGLV5-48"/>
<dbReference type="MassIVE" id="A0A075B6I7"/>
<dbReference type="Ensembl" id="ENST00000390293.1">
    <property type="protein sequence ID" value="ENSP00000374828.2"/>
    <property type="gene ID" value="ENSG00000211647.1"/>
</dbReference>
<dbReference type="UCSC" id="uc062cbp.1">
    <property type="organism name" value="human"/>
</dbReference>
<dbReference type="AGR" id="HGNC:5925"/>
<dbReference type="GeneCards" id="IGLV5-48"/>
<dbReference type="HGNC" id="HGNC:5925">
    <property type="gene designation" value="IGLV5-48"/>
</dbReference>
<dbReference type="HPA" id="ENSG00000211647">
    <property type="expression patterns" value="Tissue enhanced (intestine, lymphoid tissue, urinary bladder)"/>
</dbReference>
<dbReference type="neXtProt" id="NX_A0A075B6I7"/>
<dbReference type="VEuPathDB" id="HostDB:ENSG00000211647"/>
<dbReference type="GeneTree" id="ENSGT00940000153520"/>
<dbReference type="HOGENOM" id="CLU_077975_4_0_1"/>
<dbReference type="InParanoid" id="A0A075B6I7"/>
<dbReference type="OMA" id="MIWHNNA"/>
<dbReference type="OrthoDB" id="9537349at2759"/>
<dbReference type="PAN-GO" id="A0A075B6I7">
    <property type="GO annotations" value="3 GO annotations based on evolutionary models"/>
</dbReference>
<dbReference type="SignaLink" id="A0A075B6I7"/>
<dbReference type="PRO" id="PR:A0A075B6I7"/>
<dbReference type="Proteomes" id="UP000005640">
    <property type="component" value="Chromosome 22"/>
</dbReference>
<dbReference type="RNAct" id="A0A075B6I7">
    <property type="molecule type" value="protein"/>
</dbReference>
<dbReference type="Bgee" id="ENSG00000211647">
    <property type="expression patterns" value="Expressed in duodenum and 60 other cell types or tissues"/>
</dbReference>
<dbReference type="GO" id="GO:0005576">
    <property type="term" value="C:extracellular region"/>
    <property type="evidence" value="ECO:0007669"/>
    <property type="project" value="UniProtKB-SubCell"/>
</dbReference>
<dbReference type="GO" id="GO:0019814">
    <property type="term" value="C:immunoglobulin complex"/>
    <property type="evidence" value="ECO:0000318"/>
    <property type="project" value="GO_Central"/>
</dbReference>
<dbReference type="GO" id="GO:0005886">
    <property type="term" value="C:plasma membrane"/>
    <property type="evidence" value="ECO:0007669"/>
    <property type="project" value="UniProtKB-SubCell"/>
</dbReference>
<dbReference type="GO" id="GO:0002250">
    <property type="term" value="P:adaptive immune response"/>
    <property type="evidence" value="ECO:0007669"/>
    <property type="project" value="UniProtKB-KW"/>
</dbReference>
<dbReference type="GO" id="GO:0006955">
    <property type="term" value="P:immune response"/>
    <property type="evidence" value="ECO:0000318"/>
    <property type="project" value="GO_Central"/>
</dbReference>
<dbReference type="Gene3D" id="2.60.40.10">
    <property type="entry name" value="Immunoglobulins"/>
    <property type="match status" value="1"/>
</dbReference>
<dbReference type="InterPro" id="IPR007110">
    <property type="entry name" value="Ig-like_dom"/>
</dbReference>
<dbReference type="InterPro" id="IPR036179">
    <property type="entry name" value="Ig-like_dom_sf"/>
</dbReference>
<dbReference type="InterPro" id="IPR013783">
    <property type="entry name" value="Ig-like_fold"/>
</dbReference>
<dbReference type="InterPro" id="IPR013106">
    <property type="entry name" value="Ig_V-set"/>
</dbReference>
<dbReference type="InterPro" id="IPR050150">
    <property type="entry name" value="IgV_Light_Chain"/>
</dbReference>
<dbReference type="PANTHER" id="PTHR23267">
    <property type="entry name" value="IMMUNOGLOBULIN LIGHT CHAIN"/>
    <property type="match status" value="1"/>
</dbReference>
<dbReference type="Pfam" id="PF07686">
    <property type="entry name" value="V-set"/>
    <property type="match status" value="1"/>
</dbReference>
<dbReference type="SUPFAM" id="SSF48726">
    <property type="entry name" value="Immunoglobulin"/>
    <property type="match status" value="1"/>
</dbReference>
<dbReference type="PROSITE" id="PS50835">
    <property type="entry name" value="IG_LIKE"/>
    <property type="match status" value="1"/>
</dbReference>
<comment type="function">
    <text evidence="5 6 7 8 9">Probable non-functional open reading frame (ORF) of V region of the variable domain of immunoglobulin light chains (PubMed:24600447). Non-functional ORF generally cannot participate in the synthesis of a productive immunoglobulin chain due to altered V-(D)-J or switch recombination and/or splicing site (at mRNA level) and/or conserved amino acid change (protein level) (PubMed:9619395). Immunoglobulins, also known as antibodies, are membrane-bound or secreted glycoproteins produced by B lymphocytes. In the recognition phase of humoral immunity, the membrane-bound immunoglobulins serve as receptors which, upon binding of a specific antigen, trigger the clonal expansion and differentiation of B lymphocytes into immunoglobulins-secreting plasma cells. Secreted immunoglobulins mediate the effector phase of humoral immunity, which results in the elimination of bound antigens (PubMed:20176268, PubMed:22158414). The antigen binding site is formed by the variable domain of one heavy chain, together with that of its associated light chain. Thus, each immunoglobulin has two antigen binding sites with remarkable affinity for a particular antigen. The variable domains are assembled by a process called V-(D)-J rearrangement and can then be subjected to somatic hypermutations which, after exposure to antigen and selection, allow affinity maturation for a particular antigen (PubMed:17576170, PubMed:20176268).</text>
</comment>
<comment type="subunit">
    <text evidence="6">Immunoglobulins are composed of two identical heavy chains and two identical light chains; disulfide-linked.</text>
</comment>
<comment type="subcellular location">
    <subcellularLocation>
        <location evidence="6 7">Secreted</location>
    </subcellularLocation>
    <subcellularLocation>
        <location evidence="6 7">Cell membrane</location>
    </subcellularLocation>
</comment>
<comment type="polymorphism">
    <text evidence="11">There are several alleles. The sequence shown is that of IMGT allele IGLV5-48*02.</text>
</comment>
<comment type="caution">
    <text evidence="9 11">Most probably a non-functional protein that cannot participate in the synthesis of a productive immunoglobulin chain due to an unusual recombination signal (RS) sequence altering V-(D)-J recombination (PubMed:9619395).</text>
</comment>
<protein>
    <recommendedName>
        <fullName evidence="11">Probable non-functional immunoglobulin lambda variable 5-48</fullName>
    </recommendedName>
</protein>
<gene>
    <name evidence="4 10 12" type="primary">IGLV5-48</name>
</gene>
<organism>
    <name type="scientific">Homo sapiens</name>
    <name type="common">Human</name>
    <dbReference type="NCBI Taxonomy" id="9606"/>
    <lineage>
        <taxon>Eukaryota</taxon>
        <taxon>Metazoa</taxon>
        <taxon>Chordata</taxon>
        <taxon>Craniata</taxon>
        <taxon>Vertebrata</taxon>
        <taxon>Euteleostomi</taxon>
        <taxon>Mammalia</taxon>
        <taxon>Eutheria</taxon>
        <taxon>Euarchontoglires</taxon>
        <taxon>Primates</taxon>
        <taxon>Haplorrhini</taxon>
        <taxon>Catarrhini</taxon>
        <taxon>Hominidae</taxon>
        <taxon>Homo</taxon>
    </lineage>
</organism>
<accession>A0A075B6I7</accession>
<reference key="1">
    <citation type="journal article" date="1999" name="Nature">
        <title>The DNA sequence of human chromosome 22.</title>
        <authorList>
            <person name="Dunham I."/>
            <person name="Hunt A.R."/>
            <person name="Collins J.E."/>
            <person name="Bruskiewich R."/>
            <person name="Beare D.M."/>
            <person name="Clamp M."/>
            <person name="Smink L.J."/>
            <person name="Ainscough R."/>
            <person name="Almeida J.P."/>
            <person name="Babbage A.K."/>
            <person name="Bagguley C."/>
            <person name="Bailey J."/>
            <person name="Barlow K.F."/>
            <person name="Bates K.N."/>
            <person name="Beasley O.P."/>
            <person name="Bird C.P."/>
            <person name="Blakey S.E."/>
            <person name="Bridgeman A.M."/>
            <person name="Buck D."/>
            <person name="Burgess J."/>
            <person name="Burrill W.D."/>
            <person name="Burton J."/>
            <person name="Carder C."/>
            <person name="Carter N.P."/>
            <person name="Chen Y."/>
            <person name="Clark G."/>
            <person name="Clegg S.M."/>
            <person name="Cobley V.E."/>
            <person name="Cole C.G."/>
            <person name="Collier R.E."/>
            <person name="Connor R."/>
            <person name="Conroy D."/>
            <person name="Corby N.R."/>
            <person name="Coville G.J."/>
            <person name="Cox A.V."/>
            <person name="Davis J."/>
            <person name="Dawson E."/>
            <person name="Dhami P.D."/>
            <person name="Dockree C."/>
            <person name="Dodsworth S.J."/>
            <person name="Durbin R.M."/>
            <person name="Ellington A.G."/>
            <person name="Evans K.L."/>
            <person name="Fey J.M."/>
            <person name="Fleming K."/>
            <person name="French L."/>
            <person name="Garner A.A."/>
            <person name="Gilbert J.G.R."/>
            <person name="Goward M.E."/>
            <person name="Grafham D.V."/>
            <person name="Griffiths M.N.D."/>
            <person name="Hall C."/>
            <person name="Hall R.E."/>
            <person name="Hall-Tamlyn G."/>
            <person name="Heathcott R.W."/>
            <person name="Ho S."/>
            <person name="Holmes S."/>
            <person name="Hunt S.E."/>
            <person name="Jones M.C."/>
            <person name="Kershaw J."/>
            <person name="Kimberley A.M."/>
            <person name="King A."/>
            <person name="Laird G.K."/>
            <person name="Langford C.F."/>
            <person name="Leversha M.A."/>
            <person name="Lloyd C."/>
            <person name="Lloyd D.M."/>
            <person name="Martyn I.D."/>
            <person name="Mashreghi-Mohammadi M."/>
            <person name="Matthews L.H."/>
            <person name="Mccann O.T."/>
            <person name="Mcclay J."/>
            <person name="Mclaren S."/>
            <person name="McMurray A.A."/>
            <person name="Milne S.A."/>
            <person name="Mortimore B.J."/>
            <person name="Odell C.N."/>
            <person name="Pavitt R."/>
            <person name="Pearce A.V."/>
            <person name="Pearson D."/>
            <person name="Phillimore B.J.C.T."/>
            <person name="Phillips S.H."/>
            <person name="Plumb R.W."/>
            <person name="Ramsay H."/>
            <person name="Ramsey Y."/>
            <person name="Rogers L."/>
            <person name="Ross M.T."/>
            <person name="Scott C.E."/>
            <person name="Sehra H.K."/>
            <person name="Skuce C.D."/>
            <person name="Smalley S."/>
            <person name="Smith M.L."/>
            <person name="Soderlund C."/>
            <person name="Spragon L."/>
            <person name="Steward C.A."/>
            <person name="Sulston J.E."/>
            <person name="Swann R.M."/>
            <person name="Vaudin M."/>
            <person name="Wall M."/>
            <person name="Wallis J.M."/>
            <person name="Whiteley M.N."/>
            <person name="Willey D.L."/>
            <person name="Williams L."/>
            <person name="Williams S.A."/>
            <person name="Williamson H."/>
            <person name="Wilmer T.E."/>
            <person name="Wilming L."/>
            <person name="Wright C.L."/>
            <person name="Hubbard T."/>
            <person name="Bentley D.R."/>
            <person name="Beck S."/>
            <person name="Rogers J."/>
            <person name="Shimizu N."/>
            <person name="Minoshima S."/>
            <person name="Kawasaki K."/>
            <person name="Sasaki T."/>
            <person name="Asakawa S."/>
            <person name="Kudoh J."/>
            <person name="Shintani A."/>
            <person name="Shibuya K."/>
            <person name="Yoshizaki Y."/>
            <person name="Aoki N."/>
            <person name="Mitsuyama S."/>
            <person name="Roe B.A."/>
            <person name="Chen F."/>
            <person name="Chu L."/>
            <person name="Crabtree J."/>
            <person name="Deschamps S."/>
            <person name="Do A."/>
            <person name="Do T."/>
            <person name="Dorman A."/>
            <person name="Fang F."/>
            <person name="Fu Y."/>
            <person name="Hu P."/>
            <person name="Hua A."/>
            <person name="Kenton S."/>
            <person name="Lai H."/>
            <person name="Lao H.I."/>
            <person name="Lewis J."/>
            <person name="Lewis S."/>
            <person name="Lin S.-P."/>
            <person name="Loh P."/>
            <person name="Malaj E."/>
            <person name="Nguyen T."/>
            <person name="Pan H."/>
            <person name="Phan S."/>
            <person name="Qi S."/>
            <person name="Qian Y."/>
            <person name="Ray L."/>
            <person name="Ren Q."/>
            <person name="Shaull S."/>
            <person name="Sloan D."/>
            <person name="Song L."/>
            <person name="Wang Q."/>
            <person name="Wang Y."/>
            <person name="Wang Z."/>
            <person name="White J."/>
            <person name="Willingham D."/>
            <person name="Wu H."/>
            <person name="Yao Z."/>
            <person name="Zhan M."/>
            <person name="Zhang G."/>
            <person name="Chissoe S."/>
            <person name="Murray J."/>
            <person name="Miller N."/>
            <person name="Minx P."/>
            <person name="Fulton R."/>
            <person name="Johnson D."/>
            <person name="Bemis G."/>
            <person name="Bentley D."/>
            <person name="Bradshaw H."/>
            <person name="Bourne S."/>
            <person name="Cordes M."/>
            <person name="Du Z."/>
            <person name="Fulton L."/>
            <person name="Goela D."/>
            <person name="Graves T."/>
            <person name="Hawkins J."/>
            <person name="Hinds K."/>
            <person name="Kemp K."/>
            <person name="Latreille P."/>
            <person name="Layman D."/>
            <person name="Ozersky P."/>
            <person name="Rohlfing T."/>
            <person name="Scheet P."/>
            <person name="Walker C."/>
            <person name="Wamsley A."/>
            <person name="Wohldmann P."/>
            <person name="Pepin K."/>
            <person name="Nelson J."/>
            <person name="Korf I."/>
            <person name="Bedell J.A."/>
            <person name="Hillier L.W."/>
            <person name="Mardis E."/>
            <person name="Waterston R."/>
            <person name="Wilson R."/>
            <person name="Emanuel B.S."/>
            <person name="Shaikh T."/>
            <person name="Kurahashi H."/>
            <person name="Saitta S."/>
            <person name="Budarf M.L."/>
            <person name="McDermid H.E."/>
            <person name="Johnson A."/>
            <person name="Wong A.C.C."/>
            <person name="Morrow B.E."/>
            <person name="Edelmann L."/>
            <person name="Kim U.J."/>
            <person name="Shizuya H."/>
            <person name="Simon M.I."/>
            <person name="Dumanski J.P."/>
            <person name="Peyrard M."/>
            <person name="Kedra D."/>
            <person name="Seroussi E."/>
            <person name="Fransson I."/>
            <person name="Tapia I."/>
            <person name="Bruder C.E."/>
            <person name="O'Brien K.P."/>
            <person name="Wilkinson P."/>
            <person name="Bodenteich A."/>
            <person name="Hartman K."/>
            <person name="Hu X."/>
            <person name="Khan A.S."/>
            <person name="Lane L."/>
            <person name="Tilahun Y."/>
            <person name="Wright H."/>
        </authorList>
    </citation>
    <scope>NUCLEOTIDE SEQUENCE [LARGE SCALE GENOMIC DNA] (IMGT ALLELE IGLV5-48*02)</scope>
</reference>
<reference key="2">
    <citation type="journal article" date="1998" name="Exp. Clin. Immunogenet.">
        <title>IMGT (ImMunoGeneTics) locus on focus. A new section of Experimental and Clinical Immunogenetics.</title>
        <authorList>
            <person name="Lefranc M.P."/>
        </authorList>
    </citation>
    <scope>CHARACTERIZATION</scope>
</reference>
<reference key="3">
    <citation type="journal article" date="2001" name="Exp. Clin. Immunogenet.">
        <title>Nomenclature of the human immunoglobulin heavy (IGH) genes.</title>
        <authorList>
            <person name="Lefranc M.P."/>
        </authorList>
    </citation>
    <scope>NOMENCLATURE</scope>
</reference>
<reference key="4">
    <citation type="book" date="2001" name="The Immunoglobulin FactsBook.">
        <title>The Immunoglobulin FactsBook.</title>
        <editorList>
            <person name="Lefranc M.P."/>
            <person name="Lefranc G."/>
        </editorList>
        <authorList>
            <person name="Lefranc M.P."/>
            <person name="Lefranc G."/>
        </authorList>
    </citation>
    <scope>NOMENCLATURE</scope>
</reference>
<reference key="5">
    <citation type="journal article" date="2007" name="Annu. Rev. Genet.">
        <title>Immunoglobulin somatic hypermutation.</title>
        <authorList>
            <person name="Teng G."/>
            <person name="Papavasiliou F.N."/>
        </authorList>
    </citation>
    <scope>REVIEW ON SOMATIC HYPERMUTATION</scope>
</reference>
<reference key="6">
    <citation type="journal article" date="2010" name="J. Allergy Clin. Immunol.">
        <title>Structure and function of immunoglobulins.</title>
        <authorList>
            <person name="Schroeder H.W. Jr."/>
            <person name="Cavacini L."/>
        </authorList>
    </citation>
    <scope>REVIEW ON IMMUNOGLOBULINS</scope>
</reference>
<reference key="7">
    <citation type="journal article" date="2012" name="Nat. Rev. Immunol.">
        <title>Molecular programming of B cell memory.</title>
        <authorList>
            <person name="McHeyzer-Williams M."/>
            <person name="Okitsu S."/>
            <person name="Wang N."/>
            <person name="McHeyzer-Williams L."/>
        </authorList>
    </citation>
    <scope>REVIEW ON FUNCTION</scope>
</reference>
<reference key="8">
    <citation type="journal article" date="2014" name="Front. Immunol.">
        <title>Immunoglobulin and T Cell Receptor Genes: IMGT((R)) and the Birth and Rise of Immunoinformatics.</title>
        <authorList>
            <person name="Lefranc M.P."/>
        </authorList>
    </citation>
    <scope>NOMENCLATURE</scope>
</reference>
<keyword id="KW-1064">Adaptive immunity</keyword>
<keyword id="KW-1003">Cell membrane</keyword>
<keyword id="KW-0391">Immunity</keyword>
<keyword id="KW-1280">Immunoglobulin</keyword>
<keyword id="KW-0393">Immunoglobulin domain</keyword>
<keyword id="KW-0472">Membrane</keyword>
<keyword id="KW-1267">Proteomics identification</keyword>
<keyword id="KW-1185">Reference proteome</keyword>
<keyword id="KW-0964">Secreted</keyword>
<keyword id="KW-0732">Signal</keyword>
<sequence>MAWTPLLLLFLSHCTGSLSQAVLTQPTSLSASPGASARLTCTLRSGISVGSYRIYWYQQKPGSPPRYLLNYYSDSDKHQGSGVPSRFSGSKDASTNAGILFISGL</sequence>
<name>LV548_HUMAN</name>
<evidence type="ECO:0000250" key="1">
    <source>
        <dbReference type="UniProtKB" id="P01721"/>
    </source>
</evidence>
<evidence type="ECO:0000255" key="2"/>
<evidence type="ECO:0000255" key="3">
    <source>
        <dbReference type="PROSITE-ProRule" id="PRU00114"/>
    </source>
</evidence>
<evidence type="ECO:0000303" key="4">
    <source>
    </source>
</evidence>
<evidence type="ECO:0000303" key="5">
    <source>
    </source>
</evidence>
<evidence type="ECO:0000303" key="6">
    <source>
    </source>
</evidence>
<evidence type="ECO:0000303" key="7">
    <source>
    </source>
</evidence>
<evidence type="ECO:0000303" key="8">
    <source>
    </source>
</evidence>
<evidence type="ECO:0000303" key="9">
    <source>
    </source>
</evidence>
<evidence type="ECO:0000303" key="10">
    <source ref="4"/>
</evidence>
<evidence type="ECO:0000305" key="11"/>
<evidence type="ECO:0000312" key="12">
    <source>
        <dbReference type="HGNC" id="HGNC:5925"/>
    </source>
</evidence>